<evidence type="ECO:0000250" key="1">
    <source>
        <dbReference type="UniProtKB" id="Q9NX47"/>
    </source>
</evidence>
<evidence type="ECO:0000255" key="2"/>
<evidence type="ECO:0000255" key="3">
    <source>
        <dbReference type="PROSITE-ProRule" id="PRU00623"/>
    </source>
</evidence>
<evidence type="ECO:0000305" key="4"/>
<organism>
    <name type="scientific">Xenopus laevis</name>
    <name type="common">African clawed frog</name>
    <dbReference type="NCBI Taxonomy" id="8355"/>
    <lineage>
        <taxon>Eukaryota</taxon>
        <taxon>Metazoa</taxon>
        <taxon>Chordata</taxon>
        <taxon>Craniata</taxon>
        <taxon>Vertebrata</taxon>
        <taxon>Euteleostomi</taxon>
        <taxon>Amphibia</taxon>
        <taxon>Batrachia</taxon>
        <taxon>Anura</taxon>
        <taxon>Pipoidea</taxon>
        <taxon>Pipidae</taxon>
        <taxon>Xenopodinae</taxon>
        <taxon>Xenopus</taxon>
        <taxon>Xenopus</taxon>
    </lineage>
</organism>
<keyword id="KW-0256">Endoplasmic reticulum</keyword>
<keyword id="KW-0472">Membrane</keyword>
<keyword id="KW-0479">Metal-binding</keyword>
<keyword id="KW-0496">Mitochondrion</keyword>
<keyword id="KW-1000">Mitochondrion outer membrane</keyword>
<keyword id="KW-1185">Reference proteome</keyword>
<keyword id="KW-0808">Transferase</keyword>
<keyword id="KW-0812">Transmembrane</keyword>
<keyword id="KW-1133">Transmembrane helix</keyword>
<keyword id="KW-0833">Ubl conjugation pathway</keyword>
<keyword id="KW-0862">Zinc</keyword>
<keyword id="KW-0863">Zinc-finger</keyword>
<reference key="1">
    <citation type="submission" date="2004-06" db="EMBL/GenBank/DDBJ databases">
        <authorList>
            <consortium name="NIH - Xenopus Gene Collection (XGC) project"/>
        </authorList>
    </citation>
    <scope>NUCLEOTIDE SEQUENCE [LARGE SCALE MRNA]</scope>
    <source>
        <tissue>Eye</tissue>
    </source>
</reference>
<dbReference type="EC" id="2.3.2.27"/>
<dbReference type="EMBL" id="BC074241">
    <property type="protein sequence ID" value="AAH74241.1"/>
    <property type="molecule type" value="mRNA"/>
</dbReference>
<dbReference type="RefSeq" id="NP_001086135.1">
    <property type="nucleotide sequence ID" value="NM_001092666.1"/>
</dbReference>
<dbReference type="DNASU" id="444564"/>
<dbReference type="GeneID" id="444564"/>
<dbReference type="KEGG" id="xla:444564"/>
<dbReference type="AGR" id="Xenbase:XB-GENE-946359"/>
<dbReference type="CTD" id="444564"/>
<dbReference type="Xenbase" id="XB-GENE-946359">
    <property type="gene designation" value="marchf5.L"/>
</dbReference>
<dbReference type="OrthoDB" id="5817083at2759"/>
<dbReference type="UniPathway" id="UPA00143"/>
<dbReference type="Proteomes" id="UP000186698">
    <property type="component" value="Chromosome 7L"/>
</dbReference>
<dbReference type="Bgee" id="444564">
    <property type="expression patterns" value="Expressed in oocyte and 19 other cell types or tissues"/>
</dbReference>
<dbReference type="GO" id="GO:0005783">
    <property type="term" value="C:endoplasmic reticulum"/>
    <property type="evidence" value="ECO:0000250"/>
    <property type="project" value="UniProtKB"/>
</dbReference>
<dbReference type="GO" id="GO:0005789">
    <property type="term" value="C:endoplasmic reticulum membrane"/>
    <property type="evidence" value="ECO:0007669"/>
    <property type="project" value="UniProtKB-SubCell"/>
</dbReference>
<dbReference type="GO" id="GO:0005741">
    <property type="term" value="C:mitochondrial outer membrane"/>
    <property type="evidence" value="ECO:0000250"/>
    <property type="project" value="UniProtKB"/>
</dbReference>
<dbReference type="GO" id="GO:0061630">
    <property type="term" value="F:ubiquitin protein ligase activity"/>
    <property type="evidence" value="ECO:0000250"/>
    <property type="project" value="UniProtKB"/>
</dbReference>
<dbReference type="GO" id="GO:0008270">
    <property type="term" value="F:zinc ion binding"/>
    <property type="evidence" value="ECO:0007669"/>
    <property type="project" value="UniProtKB-KW"/>
</dbReference>
<dbReference type="GO" id="GO:0051865">
    <property type="term" value="P:protein autoubiquitination"/>
    <property type="evidence" value="ECO:0000250"/>
    <property type="project" value="UniProtKB"/>
</dbReference>
<dbReference type="GO" id="GO:0000209">
    <property type="term" value="P:protein polyubiquitination"/>
    <property type="evidence" value="ECO:0000318"/>
    <property type="project" value="GO_Central"/>
</dbReference>
<dbReference type="GO" id="GO:0090140">
    <property type="term" value="P:regulation of mitochondrial fission"/>
    <property type="evidence" value="ECO:0000250"/>
    <property type="project" value="UniProtKB"/>
</dbReference>
<dbReference type="CDD" id="cd16701">
    <property type="entry name" value="RING_CH-C4HC3_MARCH5"/>
    <property type="match status" value="1"/>
</dbReference>
<dbReference type="FunFam" id="3.30.40.10:FF:000262">
    <property type="entry name" value="E3 ubiquitin-protein ligase MARCH5"/>
    <property type="match status" value="1"/>
</dbReference>
<dbReference type="Gene3D" id="3.30.40.10">
    <property type="entry name" value="Zinc/RING finger domain, C3HC4 (zinc finger)"/>
    <property type="match status" value="1"/>
</dbReference>
<dbReference type="InterPro" id="IPR011016">
    <property type="entry name" value="Znf_RING-CH"/>
</dbReference>
<dbReference type="InterPro" id="IPR013083">
    <property type="entry name" value="Znf_RING/FYVE/PHD"/>
</dbReference>
<dbReference type="PANTHER" id="PTHR46283">
    <property type="entry name" value="E3 UBIQUITIN-PROTEIN LIGASE MARCH5"/>
    <property type="match status" value="1"/>
</dbReference>
<dbReference type="Pfam" id="PF12906">
    <property type="entry name" value="RINGv"/>
    <property type="match status" value="1"/>
</dbReference>
<dbReference type="SMART" id="SM00744">
    <property type="entry name" value="RINGv"/>
    <property type="match status" value="1"/>
</dbReference>
<dbReference type="SUPFAM" id="SSF57850">
    <property type="entry name" value="RING/U-box"/>
    <property type="match status" value="1"/>
</dbReference>
<dbReference type="PROSITE" id="PS51292">
    <property type="entry name" value="ZF_RING_CH"/>
    <property type="match status" value="1"/>
</dbReference>
<feature type="chain" id="PRO_0000271773" description="E3 ubiquitin-protein ligase MARCHF5">
    <location>
        <begin position="1"/>
        <end position="283"/>
    </location>
</feature>
<feature type="transmembrane region" description="Helical" evidence="2">
    <location>
        <begin position="102"/>
        <end position="122"/>
    </location>
</feature>
<feature type="transmembrane region" description="Helical" evidence="2">
    <location>
        <begin position="142"/>
        <end position="162"/>
    </location>
</feature>
<feature type="transmembrane region" description="Helical" evidence="2">
    <location>
        <begin position="212"/>
        <end position="232"/>
    </location>
</feature>
<feature type="transmembrane region" description="Helical" evidence="2">
    <location>
        <begin position="241"/>
        <end position="261"/>
    </location>
</feature>
<feature type="zinc finger region" description="RING-CH-type" evidence="3">
    <location>
        <begin position="9"/>
        <end position="78"/>
    </location>
</feature>
<feature type="binding site" evidence="3">
    <location>
        <position position="17"/>
    </location>
    <ligand>
        <name>Zn(2+)</name>
        <dbReference type="ChEBI" id="CHEBI:29105"/>
        <label>1</label>
    </ligand>
</feature>
<feature type="binding site" evidence="3">
    <location>
        <position position="20"/>
    </location>
    <ligand>
        <name>Zn(2+)</name>
        <dbReference type="ChEBI" id="CHEBI:29105"/>
        <label>1</label>
    </ligand>
</feature>
<feature type="binding site" evidence="3">
    <location>
        <position position="36"/>
    </location>
    <ligand>
        <name>Zn(2+)</name>
        <dbReference type="ChEBI" id="CHEBI:29105"/>
        <label>2</label>
    </ligand>
</feature>
<feature type="binding site" evidence="3">
    <location>
        <position position="38"/>
    </location>
    <ligand>
        <name>Zn(2+)</name>
        <dbReference type="ChEBI" id="CHEBI:29105"/>
        <label>2</label>
    </ligand>
</feature>
<feature type="binding site" evidence="3">
    <location>
        <position position="46"/>
    </location>
    <ligand>
        <name>Zn(2+)</name>
        <dbReference type="ChEBI" id="CHEBI:29105"/>
        <label>1</label>
    </ligand>
</feature>
<feature type="binding site" evidence="3">
    <location>
        <position position="49"/>
    </location>
    <ligand>
        <name>Zn(2+)</name>
        <dbReference type="ChEBI" id="CHEBI:29105"/>
        <label>1</label>
    </ligand>
</feature>
<feature type="binding site" evidence="3">
    <location>
        <position position="68"/>
    </location>
    <ligand>
        <name>Zn(2+)</name>
        <dbReference type="ChEBI" id="CHEBI:29105"/>
        <label>2</label>
    </ligand>
</feature>
<feature type="binding site" evidence="3">
    <location>
        <position position="71"/>
    </location>
    <ligand>
        <name>Zn(2+)</name>
        <dbReference type="ChEBI" id="CHEBI:29105"/>
        <label>2</label>
    </ligand>
</feature>
<accession>Q6GM44</accession>
<comment type="function">
    <text evidence="1">Mitochondrial E3 ubiquitin-protein ligase that plays a crucial role in the control of mitochondrial morphology by acting as a positive regulator of mitochondrial fission. May play a role in the prevention of cell senescence acting as a regulator of mitochondrial quality control.</text>
</comment>
<comment type="catalytic activity">
    <reaction>
        <text>S-ubiquitinyl-[E2 ubiquitin-conjugating enzyme]-L-cysteine + [acceptor protein]-L-lysine = [E2 ubiquitin-conjugating enzyme]-L-cysteine + N(6)-ubiquitinyl-[acceptor protein]-L-lysine.</text>
        <dbReference type="EC" id="2.3.2.27"/>
    </reaction>
</comment>
<comment type="pathway">
    <text>Protein modification; protein ubiquitination.</text>
</comment>
<comment type="subcellular location">
    <subcellularLocation>
        <location evidence="1">Mitochondrion outer membrane</location>
        <topology evidence="2">Multi-pass membrane protein</topology>
    </subcellularLocation>
    <subcellularLocation>
        <location evidence="1">Endoplasmic reticulum membrane</location>
        <topology evidence="2">Multi-pass membrane protein</topology>
    </subcellularLocation>
</comment>
<comment type="domain">
    <text evidence="3">The RING-CH-type zinc finger domain is required for E3 ligase activity.</text>
</comment>
<proteinExistence type="evidence at transcript level"/>
<gene>
    <name type="primary">marchf5</name>
    <name type="synonym">march5</name>
</gene>
<name>MARH5_XENLA</name>
<protein>
    <recommendedName>
        <fullName>E3 ubiquitin-protein ligase MARCHF5</fullName>
        <ecNumber>2.3.2.27</ecNumber>
    </recommendedName>
    <alternativeName>
        <fullName>Membrane-associated RING finger protein 5</fullName>
    </alternativeName>
    <alternativeName>
        <fullName>Membrane-associated RING-CH protein V</fullName>
        <shortName>MARCH-V</shortName>
    </alternativeName>
    <alternativeName>
        <fullName evidence="4">RING-type E3 ubiquitin transferase MARCHF5</fullName>
    </alternativeName>
</protein>
<sequence>MSESNSVSVQQMLDRSCWVCFATDEDDRTAEWVRPCRCRGSTKWVHQACLQRWVDEKQRGNSTARVACPQCNAEYLIVFPNLGPVVYVLDLADRLISKACPFAAAGIMVGSIYWTAVTYGAVTVMQVVGHKEGLDVMERADPLFLLIGLPTIPVVLILGKMIRWEDYVLRLWRKYSNKLQILNSIFPGIGCPVPRVPAEANPLADHVSATRILCGALVFPTIATIVGKLMFSTVNSNLQRTILGGIAFVAIKGAFKVYFKQQQYLRQAHRKILDSQEPEPEEV</sequence>